<dbReference type="EC" id="2.1.1.186" evidence="1"/>
<dbReference type="EMBL" id="CP000901">
    <property type="protein sequence ID" value="ABX87115.1"/>
    <property type="molecule type" value="Genomic_DNA"/>
</dbReference>
<dbReference type="RefSeq" id="WP_012229903.1">
    <property type="nucleotide sequence ID" value="NC_010159.1"/>
</dbReference>
<dbReference type="SMR" id="A9R2P6"/>
<dbReference type="KEGG" id="ypg:YpAngola_A3219"/>
<dbReference type="PATRIC" id="fig|349746.12.peg.4283"/>
<dbReference type="GO" id="GO:0005737">
    <property type="term" value="C:cytoplasm"/>
    <property type="evidence" value="ECO:0007669"/>
    <property type="project" value="UniProtKB-SubCell"/>
</dbReference>
<dbReference type="GO" id="GO:0008757">
    <property type="term" value="F:S-adenosylmethionine-dependent methyltransferase activity"/>
    <property type="evidence" value="ECO:0007669"/>
    <property type="project" value="UniProtKB-UniRule"/>
</dbReference>
<dbReference type="GO" id="GO:0032259">
    <property type="term" value="P:methylation"/>
    <property type="evidence" value="ECO:0007669"/>
    <property type="project" value="UniProtKB-KW"/>
</dbReference>
<dbReference type="GO" id="GO:0006364">
    <property type="term" value="P:rRNA processing"/>
    <property type="evidence" value="ECO:0007669"/>
    <property type="project" value="UniProtKB-UniRule"/>
</dbReference>
<dbReference type="Gene3D" id="3.30.2300.20">
    <property type="match status" value="1"/>
</dbReference>
<dbReference type="Gene3D" id="3.30.70.2810">
    <property type="match status" value="1"/>
</dbReference>
<dbReference type="Gene3D" id="3.40.50.150">
    <property type="entry name" value="Vaccinia Virus protein VP39"/>
    <property type="match status" value="1"/>
</dbReference>
<dbReference type="HAMAP" id="MF_01551">
    <property type="entry name" value="23SrRNA_methyltr_M"/>
    <property type="match status" value="1"/>
</dbReference>
<dbReference type="InterPro" id="IPR040739">
    <property type="entry name" value="RlmM_FDX"/>
</dbReference>
<dbReference type="InterPro" id="IPR048646">
    <property type="entry name" value="RlmM_THUMP-like"/>
</dbReference>
<dbReference type="InterPro" id="IPR002877">
    <property type="entry name" value="RNA_MeTrfase_FtsJ_dom"/>
</dbReference>
<dbReference type="InterPro" id="IPR011224">
    <property type="entry name" value="rRNA_MeTrfase_M"/>
</dbReference>
<dbReference type="InterPro" id="IPR029063">
    <property type="entry name" value="SAM-dependent_MTases_sf"/>
</dbReference>
<dbReference type="NCBIfam" id="NF008734">
    <property type="entry name" value="PRK11760.1"/>
    <property type="match status" value="1"/>
</dbReference>
<dbReference type="PANTHER" id="PTHR37524">
    <property type="entry name" value="RIBOSOMAL RNA LARGE SUBUNIT METHYLTRANSFERASE M"/>
    <property type="match status" value="1"/>
</dbReference>
<dbReference type="PANTHER" id="PTHR37524:SF2">
    <property type="entry name" value="RIBOSOMAL RNA METHYLTRANSFERASE FTSJ DOMAIN-CONTAINING PROTEIN"/>
    <property type="match status" value="1"/>
</dbReference>
<dbReference type="Pfam" id="PF01728">
    <property type="entry name" value="FtsJ"/>
    <property type="match status" value="1"/>
</dbReference>
<dbReference type="Pfam" id="PF18125">
    <property type="entry name" value="RlmM_FDX"/>
    <property type="match status" value="1"/>
</dbReference>
<dbReference type="Pfam" id="PF21239">
    <property type="entry name" value="RLMM_N"/>
    <property type="match status" value="1"/>
</dbReference>
<dbReference type="PIRSF" id="PIRSF028774">
    <property type="entry name" value="UCP028774"/>
    <property type="match status" value="1"/>
</dbReference>
<dbReference type="SUPFAM" id="SSF53335">
    <property type="entry name" value="S-adenosyl-L-methionine-dependent methyltransferases"/>
    <property type="match status" value="1"/>
</dbReference>
<gene>
    <name evidence="1" type="primary">rlmM</name>
    <name type="ordered locus">YpAngola_A3219</name>
</gene>
<name>RLMM_YERPG</name>
<organism>
    <name type="scientific">Yersinia pestis bv. Antiqua (strain Angola)</name>
    <dbReference type="NCBI Taxonomy" id="349746"/>
    <lineage>
        <taxon>Bacteria</taxon>
        <taxon>Pseudomonadati</taxon>
        <taxon>Pseudomonadota</taxon>
        <taxon>Gammaproteobacteria</taxon>
        <taxon>Enterobacterales</taxon>
        <taxon>Yersiniaceae</taxon>
        <taxon>Yersinia</taxon>
    </lineage>
</organism>
<accession>A9R2P6</accession>
<feature type="chain" id="PRO_1000201539" description="Ribosomal RNA large subunit methyltransferase M">
    <location>
        <begin position="1"/>
        <end position="368"/>
    </location>
</feature>
<feature type="active site" description="Proton acceptor" evidence="1">
    <location>
        <position position="307"/>
    </location>
</feature>
<feature type="binding site" evidence="1">
    <location>
        <position position="189"/>
    </location>
    <ligand>
        <name>S-adenosyl-L-methionine</name>
        <dbReference type="ChEBI" id="CHEBI:59789"/>
    </ligand>
</feature>
<feature type="binding site" evidence="1">
    <location>
        <begin position="222"/>
        <end position="225"/>
    </location>
    <ligand>
        <name>S-adenosyl-L-methionine</name>
        <dbReference type="ChEBI" id="CHEBI:59789"/>
    </ligand>
</feature>
<feature type="binding site" evidence="1">
    <location>
        <position position="241"/>
    </location>
    <ligand>
        <name>S-adenosyl-L-methionine</name>
        <dbReference type="ChEBI" id="CHEBI:59789"/>
    </ligand>
</feature>
<feature type="binding site" evidence="1">
    <location>
        <position position="261"/>
    </location>
    <ligand>
        <name>S-adenosyl-L-methionine</name>
        <dbReference type="ChEBI" id="CHEBI:59789"/>
    </ligand>
</feature>
<feature type="binding site" evidence="1">
    <location>
        <position position="278"/>
    </location>
    <ligand>
        <name>S-adenosyl-L-methionine</name>
        <dbReference type="ChEBI" id="CHEBI:59789"/>
    </ligand>
</feature>
<reference key="1">
    <citation type="journal article" date="2010" name="J. Bacteriol.">
        <title>Genome sequence of the deep-rooted Yersinia pestis strain Angola reveals new insights into the evolution and pangenome of the plague bacterium.</title>
        <authorList>
            <person name="Eppinger M."/>
            <person name="Worsham P.L."/>
            <person name="Nikolich M.P."/>
            <person name="Riley D.R."/>
            <person name="Sebastian Y."/>
            <person name="Mou S."/>
            <person name="Achtman M."/>
            <person name="Lindler L.E."/>
            <person name="Ravel J."/>
        </authorList>
    </citation>
    <scope>NUCLEOTIDE SEQUENCE [LARGE SCALE GENOMIC DNA]</scope>
    <source>
        <strain>Angola</strain>
    </source>
</reference>
<protein>
    <recommendedName>
        <fullName evidence="1">Ribosomal RNA large subunit methyltransferase M</fullName>
        <ecNumber evidence="1">2.1.1.186</ecNumber>
    </recommendedName>
    <alternativeName>
        <fullName evidence="1">23S rRNA (cytidine2498-2'-O)-methyltransferase</fullName>
    </alternativeName>
    <alternativeName>
        <fullName evidence="1">23S rRNA 2'-O-ribose methyltransferase RlmM</fullName>
    </alternativeName>
</protein>
<sequence length="368" mass="42284">MNNKIALYCRSGFEKECAAEITEKAAQLEIFGFARVKENSGYVLFECYQLEDADRLIREIPFREFIFARQMMVVGELLKDLPPEDRVSPIVGMLVGVIEKAGELRVEVADTNESKELLKFCRKLTVPLRSALREQKILSARENAHRPVVHVFFIAPGCCYVGYSYSNNNSPFYMGIPRLKFPSDAPSRSTLKLEEAFHVFIPADEWEERLASGMHAVDLGACPGGWTYQLVQRSMMIQAVDNGLMAQSLMDTGQVTHNRADGFKYEPTRSNIYWLVCDMVEKPTKVTQLITKWLVNGWCREAIFNLKLPMKKRYEEVVQNLAMMDEQLKENGINADIHAKQLYHDREEVTVHVRRIWSGAPGRRDERY</sequence>
<keyword id="KW-0963">Cytoplasm</keyword>
<keyword id="KW-0489">Methyltransferase</keyword>
<keyword id="KW-0698">rRNA processing</keyword>
<keyword id="KW-0949">S-adenosyl-L-methionine</keyword>
<keyword id="KW-0808">Transferase</keyword>
<evidence type="ECO:0000255" key="1">
    <source>
        <dbReference type="HAMAP-Rule" id="MF_01551"/>
    </source>
</evidence>
<comment type="function">
    <text evidence="1">Catalyzes the 2'-O-methylation at nucleotide C2498 in 23S rRNA.</text>
</comment>
<comment type="catalytic activity">
    <reaction evidence="1">
        <text>cytidine(2498) in 23S rRNA + S-adenosyl-L-methionine = 2'-O-methylcytidine(2498) in 23S rRNA + S-adenosyl-L-homocysteine + H(+)</text>
        <dbReference type="Rhea" id="RHEA:42788"/>
        <dbReference type="Rhea" id="RHEA-COMP:10244"/>
        <dbReference type="Rhea" id="RHEA-COMP:10245"/>
        <dbReference type="ChEBI" id="CHEBI:15378"/>
        <dbReference type="ChEBI" id="CHEBI:57856"/>
        <dbReference type="ChEBI" id="CHEBI:59789"/>
        <dbReference type="ChEBI" id="CHEBI:74495"/>
        <dbReference type="ChEBI" id="CHEBI:82748"/>
        <dbReference type="EC" id="2.1.1.186"/>
    </reaction>
</comment>
<comment type="subunit">
    <text evidence="1">Monomer.</text>
</comment>
<comment type="subcellular location">
    <subcellularLocation>
        <location evidence="1">Cytoplasm</location>
    </subcellularLocation>
</comment>
<comment type="similarity">
    <text evidence="1">Belongs to the class I-like SAM-binding methyltransferase superfamily. RNA methyltransferase RlmE family. RlmM subfamily.</text>
</comment>
<proteinExistence type="inferred from homology"/>